<evidence type="ECO:0000255" key="1">
    <source>
        <dbReference type="HAMAP-Rule" id="MF_00436"/>
    </source>
</evidence>
<evidence type="ECO:0000255" key="2">
    <source>
        <dbReference type="PROSITE-ProRule" id="PRU01346"/>
    </source>
</evidence>
<organism>
    <name type="scientific">Bacillus mycoides (strain KBAB4)</name>
    <name type="common">Bacillus weihenstephanensis</name>
    <dbReference type="NCBI Taxonomy" id="315730"/>
    <lineage>
        <taxon>Bacteria</taxon>
        <taxon>Bacillati</taxon>
        <taxon>Bacillota</taxon>
        <taxon>Bacilli</taxon>
        <taxon>Bacillales</taxon>
        <taxon>Bacillaceae</taxon>
        <taxon>Bacillus</taxon>
        <taxon>Bacillus cereus group</taxon>
    </lineage>
</organism>
<keyword id="KW-0694">RNA-binding</keyword>
<keyword id="KW-0346">Stress response</keyword>
<feature type="chain" id="PRO_1000190306" description="RNA-binding protein Hfq">
    <location>
        <begin position="1"/>
        <end position="74"/>
    </location>
</feature>
<feature type="domain" description="Sm" evidence="2">
    <location>
        <begin position="9"/>
        <end position="69"/>
    </location>
</feature>
<sequence length="74" mass="8646">MKQSINIQDQFLNQLRKENTFVTLYLLNGFQLRGLIKGFDNFTVLLETEGKQQLIYKHAISTFVPQKNVSIELE</sequence>
<accession>A9VR02</accession>
<gene>
    <name evidence="1" type="primary">hfq</name>
    <name type="ordered locus">BcerKBAB4_3478</name>
</gene>
<comment type="function">
    <text evidence="1">RNA chaperone that binds small regulatory RNA (sRNAs) and mRNAs to facilitate mRNA translational regulation in response to envelope stress, environmental stress and changes in metabolite concentrations. Also binds with high specificity to tRNAs.</text>
</comment>
<comment type="subunit">
    <text evidence="1">Homohexamer.</text>
</comment>
<comment type="similarity">
    <text evidence="1">Belongs to the Hfq family.</text>
</comment>
<reference key="1">
    <citation type="journal article" date="2008" name="Chem. Biol. Interact.">
        <title>Extending the Bacillus cereus group genomics to putative food-borne pathogens of different toxicity.</title>
        <authorList>
            <person name="Lapidus A."/>
            <person name="Goltsman E."/>
            <person name="Auger S."/>
            <person name="Galleron N."/>
            <person name="Segurens B."/>
            <person name="Dossat C."/>
            <person name="Land M.L."/>
            <person name="Broussolle V."/>
            <person name="Brillard J."/>
            <person name="Guinebretiere M.-H."/>
            <person name="Sanchis V."/>
            <person name="Nguen-the C."/>
            <person name="Lereclus D."/>
            <person name="Richardson P."/>
            <person name="Wincker P."/>
            <person name="Weissenbach J."/>
            <person name="Ehrlich S.D."/>
            <person name="Sorokin A."/>
        </authorList>
    </citation>
    <scope>NUCLEOTIDE SEQUENCE [LARGE SCALE GENOMIC DNA]</scope>
    <source>
        <strain>KBAB4</strain>
    </source>
</reference>
<dbReference type="EMBL" id="CP000903">
    <property type="protein sequence ID" value="ABY44651.1"/>
    <property type="molecule type" value="Genomic_DNA"/>
</dbReference>
<dbReference type="RefSeq" id="WP_000813896.1">
    <property type="nucleotide sequence ID" value="NZ_CAKMRX030000111.1"/>
</dbReference>
<dbReference type="SMR" id="A9VR02"/>
<dbReference type="GeneID" id="93007416"/>
<dbReference type="KEGG" id="bwe:BcerKBAB4_3478"/>
<dbReference type="eggNOG" id="COG1923">
    <property type="taxonomic scope" value="Bacteria"/>
</dbReference>
<dbReference type="HOGENOM" id="CLU_113688_3_0_9"/>
<dbReference type="Proteomes" id="UP000002154">
    <property type="component" value="Chromosome"/>
</dbReference>
<dbReference type="GO" id="GO:0005829">
    <property type="term" value="C:cytosol"/>
    <property type="evidence" value="ECO:0007669"/>
    <property type="project" value="TreeGrafter"/>
</dbReference>
<dbReference type="GO" id="GO:0003723">
    <property type="term" value="F:RNA binding"/>
    <property type="evidence" value="ECO:0007669"/>
    <property type="project" value="UniProtKB-UniRule"/>
</dbReference>
<dbReference type="GO" id="GO:0006355">
    <property type="term" value="P:regulation of DNA-templated transcription"/>
    <property type="evidence" value="ECO:0007669"/>
    <property type="project" value="InterPro"/>
</dbReference>
<dbReference type="GO" id="GO:0043487">
    <property type="term" value="P:regulation of RNA stability"/>
    <property type="evidence" value="ECO:0007669"/>
    <property type="project" value="TreeGrafter"/>
</dbReference>
<dbReference type="GO" id="GO:0045974">
    <property type="term" value="P:regulation of translation, ncRNA-mediated"/>
    <property type="evidence" value="ECO:0007669"/>
    <property type="project" value="TreeGrafter"/>
</dbReference>
<dbReference type="CDD" id="cd01716">
    <property type="entry name" value="Hfq"/>
    <property type="match status" value="1"/>
</dbReference>
<dbReference type="FunFam" id="2.30.30.100:FF:000012">
    <property type="entry name" value="RNA-binding protein Hfq"/>
    <property type="match status" value="1"/>
</dbReference>
<dbReference type="Gene3D" id="2.30.30.100">
    <property type="match status" value="1"/>
</dbReference>
<dbReference type="HAMAP" id="MF_00436">
    <property type="entry name" value="Hfq"/>
    <property type="match status" value="1"/>
</dbReference>
<dbReference type="InterPro" id="IPR005001">
    <property type="entry name" value="Hfq"/>
</dbReference>
<dbReference type="InterPro" id="IPR010920">
    <property type="entry name" value="LSM_dom_sf"/>
</dbReference>
<dbReference type="InterPro" id="IPR047575">
    <property type="entry name" value="Sm"/>
</dbReference>
<dbReference type="NCBIfam" id="TIGR02383">
    <property type="entry name" value="Hfq"/>
    <property type="match status" value="1"/>
</dbReference>
<dbReference type="NCBIfam" id="NF001602">
    <property type="entry name" value="PRK00395.1"/>
    <property type="match status" value="1"/>
</dbReference>
<dbReference type="PANTHER" id="PTHR34772">
    <property type="entry name" value="RNA-BINDING PROTEIN HFQ"/>
    <property type="match status" value="1"/>
</dbReference>
<dbReference type="PANTHER" id="PTHR34772:SF1">
    <property type="entry name" value="RNA-BINDING PROTEIN HFQ"/>
    <property type="match status" value="1"/>
</dbReference>
<dbReference type="Pfam" id="PF17209">
    <property type="entry name" value="Hfq"/>
    <property type="match status" value="1"/>
</dbReference>
<dbReference type="SUPFAM" id="SSF50182">
    <property type="entry name" value="Sm-like ribonucleoproteins"/>
    <property type="match status" value="1"/>
</dbReference>
<dbReference type="PROSITE" id="PS52002">
    <property type="entry name" value="SM"/>
    <property type="match status" value="1"/>
</dbReference>
<name>HFQ_BACMK</name>
<proteinExistence type="inferred from homology"/>
<protein>
    <recommendedName>
        <fullName evidence="1">RNA-binding protein Hfq</fullName>
    </recommendedName>
</protein>